<comment type="function">
    <text>Required for the development of the antennal, intercalary and mandibular segments of the head.</text>
</comment>
<comment type="subcellular location">
    <subcellularLocation>
        <location evidence="1">Nucleus</location>
    </subcellularLocation>
</comment>
<comment type="developmental stage">
    <text>First expressed in a stripe covering the head anlagen of the syncytial blastoderm embryo, persists through gastrulation and decays during germ band extension. Expressed later in development in a complex spatially restricted pattern.</text>
</comment>
<feature type="chain" id="PRO_0000046910" description="Transcription factor btd">
    <location>
        <begin position="1"/>
        <end position="644"/>
    </location>
</feature>
<feature type="zinc finger region" description="C2H2-type 1" evidence="2">
    <location>
        <begin position="333"/>
        <end position="357"/>
    </location>
</feature>
<feature type="zinc finger region" description="C2H2-type 2" evidence="2">
    <location>
        <begin position="363"/>
        <end position="385"/>
    </location>
</feature>
<feature type="zinc finger region" description="C2H2-type 3" evidence="2">
    <location>
        <begin position="391"/>
        <end position="413"/>
    </location>
</feature>
<feature type="region of interest" description="Disordered" evidence="3">
    <location>
        <begin position="16"/>
        <end position="65"/>
    </location>
</feature>
<feature type="region of interest" description="Disordered" evidence="3">
    <location>
        <begin position="101"/>
        <end position="196"/>
    </location>
</feature>
<feature type="region of interest" description="Disordered" evidence="3">
    <location>
        <begin position="437"/>
        <end position="461"/>
    </location>
</feature>
<feature type="region of interest" description="Disordered" evidence="3">
    <location>
        <begin position="478"/>
        <end position="537"/>
    </location>
</feature>
<feature type="compositionally biased region" description="Low complexity" evidence="3">
    <location>
        <begin position="101"/>
        <end position="119"/>
    </location>
</feature>
<feature type="compositionally biased region" description="Low complexity" evidence="3">
    <location>
        <begin position="140"/>
        <end position="196"/>
    </location>
</feature>
<feature type="compositionally biased region" description="Low complexity" evidence="3">
    <location>
        <begin position="499"/>
        <end position="508"/>
    </location>
</feature>
<feature type="compositionally biased region" description="Low complexity" evidence="3">
    <location>
        <begin position="521"/>
        <end position="537"/>
    </location>
</feature>
<protein>
    <recommendedName>
        <fullName>Transcription factor btd</fullName>
    </recommendedName>
    <alternativeName>
        <fullName>Protein buttonhead</fullName>
    </alternativeName>
</protein>
<reference key="1">
    <citation type="journal article" date="1993" name="Nature">
        <title>A Drosophila homologue of human Sp1 is a head-specific segmentation gene.</title>
        <authorList>
            <person name="Wimmer E.A."/>
            <person name="Jaeckle H."/>
            <person name="Pfeifle C."/>
            <person name="Cohen S.M."/>
        </authorList>
    </citation>
    <scope>NUCLEOTIDE SEQUENCE [GENOMIC DNA]</scope>
    <source>
        <strain>Canton-S</strain>
        <tissue>Embryo</tissue>
    </source>
</reference>
<reference key="2">
    <citation type="journal article" date="2000" name="Science">
        <title>The genome sequence of Drosophila melanogaster.</title>
        <authorList>
            <person name="Adams M.D."/>
            <person name="Celniker S.E."/>
            <person name="Holt R.A."/>
            <person name="Evans C.A."/>
            <person name="Gocayne J.D."/>
            <person name="Amanatides P.G."/>
            <person name="Scherer S.E."/>
            <person name="Li P.W."/>
            <person name="Hoskins R.A."/>
            <person name="Galle R.F."/>
            <person name="George R.A."/>
            <person name="Lewis S.E."/>
            <person name="Richards S."/>
            <person name="Ashburner M."/>
            <person name="Henderson S.N."/>
            <person name="Sutton G.G."/>
            <person name="Wortman J.R."/>
            <person name="Yandell M.D."/>
            <person name="Zhang Q."/>
            <person name="Chen L.X."/>
            <person name="Brandon R.C."/>
            <person name="Rogers Y.-H.C."/>
            <person name="Blazej R.G."/>
            <person name="Champe M."/>
            <person name="Pfeiffer B.D."/>
            <person name="Wan K.H."/>
            <person name="Doyle C."/>
            <person name="Baxter E.G."/>
            <person name="Helt G."/>
            <person name="Nelson C.R."/>
            <person name="Miklos G.L.G."/>
            <person name="Abril J.F."/>
            <person name="Agbayani A."/>
            <person name="An H.-J."/>
            <person name="Andrews-Pfannkoch C."/>
            <person name="Baldwin D."/>
            <person name="Ballew R.M."/>
            <person name="Basu A."/>
            <person name="Baxendale J."/>
            <person name="Bayraktaroglu L."/>
            <person name="Beasley E.M."/>
            <person name="Beeson K.Y."/>
            <person name="Benos P.V."/>
            <person name="Berman B.P."/>
            <person name="Bhandari D."/>
            <person name="Bolshakov S."/>
            <person name="Borkova D."/>
            <person name="Botchan M.R."/>
            <person name="Bouck J."/>
            <person name="Brokstein P."/>
            <person name="Brottier P."/>
            <person name="Burtis K.C."/>
            <person name="Busam D.A."/>
            <person name="Butler H."/>
            <person name="Cadieu E."/>
            <person name="Center A."/>
            <person name="Chandra I."/>
            <person name="Cherry J.M."/>
            <person name="Cawley S."/>
            <person name="Dahlke C."/>
            <person name="Davenport L.B."/>
            <person name="Davies P."/>
            <person name="de Pablos B."/>
            <person name="Delcher A."/>
            <person name="Deng Z."/>
            <person name="Mays A.D."/>
            <person name="Dew I."/>
            <person name="Dietz S.M."/>
            <person name="Dodson K."/>
            <person name="Doup L.E."/>
            <person name="Downes M."/>
            <person name="Dugan-Rocha S."/>
            <person name="Dunkov B.C."/>
            <person name="Dunn P."/>
            <person name="Durbin K.J."/>
            <person name="Evangelista C.C."/>
            <person name="Ferraz C."/>
            <person name="Ferriera S."/>
            <person name="Fleischmann W."/>
            <person name="Fosler C."/>
            <person name="Gabrielian A.E."/>
            <person name="Garg N.S."/>
            <person name="Gelbart W.M."/>
            <person name="Glasser K."/>
            <person name="Glodek A."/>
            <person name="Gong F."/>
            <person name="Gorrell J.H."/>
            <person name="Gu Z."/>
            <person name="Guan P."/>
            <person name="Harris M."/>
            <person name="Harris N.L."/>
            <person name="Harvey D.A."/>
            <person name="Heiman T.J."/>
            <person name="Hernandez J.R."/>
            <person name="Houck J."/>
            <person name="Hostin D."/>
            <person name="Houston K.A."/>
            <person name="Howland T.J."/>
            <person name="Wei M.-H."/>
            <person name="Ibegwam C."/>
            <person name="Jalali M."/>
            <person name="Kalush F."/>
            <person name="Karpen G.H."/>
            <person name="Ke Z."/>
            <person name="Kennison J.A."/>
            <person name="Ketchum K.A."/>
            <person name="Kimmel B.E."/>
            <person name="Kodira C.D."/>
            <person name="Kraft C.L."/>
            <person name="Kravitz S."/>
            <person name="Kulp D."/>
            <person name="Lai Z."/>
            <person name="Lasko P."/>
            <person name="Lei Y."/>
            <person name="Levitsky A.A."/>
            <person name="Li J.H."/>
            <person name="Li Z."/>
            <person name="Liang Y."/>
            <person name="Lin X."/>
            <person name="Liu X."/>
            <person name="Mattei B."/>
            <person name="McIntosh T.C."/>
            <person name="McLeod M.P."/>
            <person name="McPherson D."/>
            <person name="Merkulov G."/>
            <person name="Milshina N.V."/>
            <person name="Mobarry C."/>
            <person name="Morris J."/>
            <person name="Moshrefi A."/>
            <person name="Mount S.M."/>
            <person name="Moy M."/>
            <person name="Murphy B."/>
            <person name="Murphy L."/>
            <person name="Muzny D.M."/>
            <person name="Nelson D.L."/>
            <person name="Nelson D.R."/>
            <person name="Nelson K.A."/>
            <person name="Nixon K."/>
            <person name="Nusskern D.R."/>
            <person name="Pacleb J.M."/>
            <person name="Palazzolo M."/>
            <person name="Pittman G.S."/>
            <person name="Pan S."/>
            <person name="Pollard J."/>
            <person name="Puri V."/>
            <person name="Reese M.G."/>
            <person name="Reinert K."/>
            <person name="Remington K."/>
            <person name="Saunders R.D.C."/>
            <person name="Scheeler F."/>
            <person name="Shen H."/>
            <person name="Shue B.C."/>
            <person name="Siden-Kiamos I."/>
            <person name="Simpson M."/>
            <person name="Skupski M.P."/>
            <person name="Smith T.J."/>
            <person name="Spier E."/>
            <person name="Spradling A.C."/>
            <person name="Stapleton M."/>
            <person name="Strong R."/>
            <person name="Sun E."/>
            <person name="Svirskas R."/>
            <person name="Tector C."/>
            <person name="Turner R."/>
            <person name="Venter E."/>
            <person name="Wang A.H."/>
            <person name="Wang X."/>
            <person name="Wang Z.-Y."/>
            <person name="Wassarman D.A."/>
            <person name="Weinstock G.M."/>
            <person name="Weissenbach J."/>
            <person name="Williams S.M."/>
            <person name="Woodage T."/>
            <person name="Worley K.C."/>
            <person name="Wu D."/>
            <person name="Yang S."/>
            <person name="Yao Q.A."/>
            <person name="Ye J."/>
            <person name="Yeh R.-F."/>
            <person name="Zaveri J.S."/>
            <person name="Zhan M."/>
            <person name="Zhang G."/>
            <person name="Zhao Q."/>
            <person name="Zheng L."/>
            <person name="Zheng X.H."/>
            <person name="Zhong F.N."/>
            <person name="Zhong W."/>
            <person name="Zhou X."/>
            <person name="Zhu S.C."/>
            <person name="Zhu X."/>
            <person name="Smith H.O."/>
            <person name="Gibbs R.A."/>
            <person name="Myers E.W."/>
            <person name="Rubin G.M."/>
            <person name="Venter J.C."/>
        </authorList>
    </citation>
    <scope>NUCLEOTIDE SEQUENCE [LARGE SCALE GENOMIC DNA]</scope>
    <source>
        <strain>Berkeley</strain>
    </source>
</reference>
<reference key="3">
    <citation type="journal article" date="2002" name="Genome Biol.">
        <title>Annotation of the Drosophila melanogaster euchromatic genome: a systematic review.</title>
        <authorList>
            <person name="Misra S."/>
            <person name="Crosby M.A."/>
            <person name="Mungall C.J."/>
            <person name="Matthews B.B."/>
            <person name="Campbell K.S."/>
            <person name="Hradecky P."/>
            <person name="Huang Y."/>
            <person name="Kaminker J.S."/>
            <person name="Millburn G.H."/>
            <person name="Prochnik S.E."/>
            <person name="Smith C.D."/>
            <person name="Tupy J.L."/>
            <person name="Whitfield E.J."/>
            <person name="Bayraktaroglu L."/>
            <person name="Berman B.P."/>
            <person name="Bettencourt B.R."/>
            <person name="Celniker S.E."/>
            <person name="de Grey A.D.N.J."/>
            <person name="Drysdale R.A."/>
            <person name="Harris N.L."/>
            <person name="Richter J."/>
            <person name="Russo S."/>
            <person name="Schroeder A.J."/>
            <person name="Shu S.Q."/>
            <person name="Stapleton M."/>
            <person name="Yamada C."/>
            <person name="Ashburner M."/>
            <person name="Gelbart W.M."/>
            <person name="Rubin G.M."/>
            <person name="Lewis S.E."/>
        </authorList>
    </citation>
    <scope>GENOME REANNOTATION</scope>
    <source>
        <strain>Berkeley</strain>
    </source>
</reference>
<sequence length="644" mass="68581">MIDAACNYLNPYAQQHQAQQQQHAQHQQHAQQQQHHLHMQQAQHHLHLSHQQAQQQHMQHLTQQQQQQQQQQQQQQQQQQQQQQPQQQQHDFLSAAALLSAPPSLSGSSSGSSSGSSPLYGKPPMKLELPYPQASSTGTASPNSSIQSAPSSASVSPSIFPSPAQSFASISASPSTPTTTLAPPTTAAAGALAGSPTSSSPSSSAASAAAAAAAAAAAAADLGAAAVASAAYGWNTAYSGLGPARSQFPYAQYASDYYGNAVGMSSSAAWFSHQERLYQPWSSQSYPGFNFDDIAFQTQLQRRSVRCTCPNCTNEMSGLPPIVGPDERGRKQHICHIPGCERLYGKASHLKTHLRWHTGERPFLCLTCGKRFSRSDELQRHGRTHTNYRPYACPICSKKFSRSDHLSKHKKTHFKDKKSKKVLAAEAKEQAAAAIKLEKKEKKSGKPLTPPVEFKQEQPDTTPLVNYAPYANLYQHSTSAGSSVNPPPPPPPLFQQQMTTTTSSAAASFVEQPWSSSSSRAIQPATTSASSSSSSSASSPAAAVVSAIGSASSPAASATALAQHHYAALAMQSESQLAAEYGLTMSGLASGASQDSSSSCHMKSEYAASYPADFGAGTASYGYPHPHPHHHNAWAAAYHPHATA</sequence>
<dbReference type="EMBL" id="Z29361">
    <property type="protein sequence ID" value="CAA82545.1"/>
    <property type="molecule type" value="Genomic_DNA"/>
</dbReference>
<dbReference type="EMBL" id="AE014298">
    <property type="protein sequence ID" value="AAF46518.1"/>
    <property type="molecule type" value="Genomic_DNA"/>
</dbReference>
<dbReference type="RefSeq" id="NP_511100.1">
    <property type="nucleotide sequence ID" value="NM_078545.3"/>
</dbReference>
<dbReference type="SMR" id="Q24266"/>
<dbReference type="BioGRID" id="58350">
    <property type="interactions" value="16"/>
</dbReference>
<dbReference type="DIP" id="DIP-20818N"/>
<dbReference type="FunCoup" id="Q24266">
    <property type="interactions" value="2"/>
</dbReference>
<dbReference type="IntAct" id="Q24266">
    <property type="interactions" value="8"/>
</dbReference>
<dbReference type="STRING" id="7227.FBpp0071314"/>
<dbReference type="PaxDb" id="7227-FBpp0071314"/>
<dbReference type="EnsemblMetazoa" id="FBtr0071379">
    <property type="protein sequence ID" value="FBpp0071314"/>
    <property type="gene ID" value="FBgn0000233"/>
</dbReference>
<dbReference type="GeneID" id="31912"/>
<dbReference type="KEGG" id="dme:Dmel_CG12653"/>
<dbReference type="UCSC" id="CG12653-RA">
    <property type="organism name" value="d. melanogaster"/>
</dbReference>
<dbReference type="AGR" id="FB:FBgn0000233"/>
<dbReference type="CTD" id="686"/>
<dbReference type="FlyBase" id="FBgn0000233">
    <property type="gene designation" value="btd"/>
</dbReference>
<dbReference type="VEuPathDB" id="VectorBase:FBgn0000233"/>
<dbReference type="eggNOG" id="KOG1721">
    <property type="taxonomic scope" value="Eukaryota"/>
</dbReference>
<dbReference type="GeneTree" id="ENSGT00940000165792"/>
<dbReference type="HOGENOM" id="CLU_369312_0_0_1"/>
<dbReference type="InParanoid" id="Q24266"/>
<dbReference type="OMA" id="HYAALAM"/>
<dbReference type="OrthoDB" id="6365676at2759"/>
<dbReference type="PhylomeDB" id="Q24266"/>
<dbReference type="Reactome" id="R-DME-2173796">
    <property type="pathway name" value="SMAD2/SMAD3:SMAD4 heterotrimer regulates transcription"/>
</dbReference>
<dbReference type="Reactome" id="R-DME-6807505">
    <property type="pathway name" value="RNA polymerase II transcribes snRNA genes"/>
</dbReference>
<dbReference type="Reactome" id="R-DME-9018519">
    <property type="pathway name" value="Estrogen-dependent gene expression"/>
</dbReference>
<dbReference type="Reactome" id="R-DME-9762293">
    <property type="pathway name" value="Regulation of CDH11 gene transcription"/>
</dbReference>
<dbReference type="SignaLink" id="Q24266"/>
<dbReference type="BioGRID-ORCS" id="31912">
    <property type="hits" value="0 hits in 3 CRISPR screens"/>
</dbReference>
<dbReference type="GenomeRNAi" id="31912"/>
<dbReference type="PRO" id="PR:Q24266"/>
<dbReference type="Proteomes" id="UP000000803">
    <property type="component" value="Chromosome X"/>
</dbReference>
<dbReference type="Bgee" id="FBgn0000233">
    <property type="expression patterns" value="Expressed in anterior ectoderm anlage (Drosophila) and 48 other cell types or tissues"/>
</dbReference>
<dbReference type="GO" id="GO:0005634">
    <property type="term" value="C:nucleus"/>
    <property type="evidence" value="ECO:0007669"/>
    <property type="project" value="UniProtKB-SubCell"/>
</dbReference>
<dbReference type="GO" id="GO:0003700">
    <property type="term" value="F:DNA-binding transcription factor activity"/>
    <property type="evidence" value="ECO:0000314"/>
    <property type="project" value="FlyBase"/>
</dbReference>
<dbReference type="GO" id="GO:0000981">
    <property type="term" value="F:DNA-binding transcription factor activity, RNA polymerase II-specific"/>
    <property type="evidence" value="ECO:0000314"/>
    <property type="project" value="FlyBase"/>
</dbReference>
<dbReference type="GO" id="GO:0000978">
    <property type="term" value="F:RNA polymerase II cis-regulatory region sequence-specific DNA binding"/>
    <property type="evidence" value="ECO:0000318"/>
    <property type="project" value="GO_Central"/>
</dbReference>
<dbReference type="GO" id="GO:0043565">
    <property type="term" value="F:sequence-specific DNA binding"/>
    <property type="evidence" value="ECO:0000314"/>
    <property type="project" value="FlyBase"/>
</dbReference>
<dbReference type="GO" id="GO:0017025">
    <property type="term" value="F:TBP-class protein binding"/>
    <property type="evidence" value="ECO:0000353"/>
    <property type="project" value="FlyBase"/>
</dbReference>
<dbReference type="GO" id="GO:0008270">
    <property type="term" value="F:zinc ion binding"/>
    <property type="evidence" value="ECO:0007669"/>
    <property type="project" value="UniProtKB-KW"/>
</dbReference>
<dbReference type="GO" id="GO:0035288">
    <property type="term" value="P:anterior head segmentation"/>
    <property type="evidence" value="ECO:0000304"/>
    <property type="project" value="FlyBase"/>
</dbReference>
<dbReference type="GO" id="GO:0007376">
    <property type="term" value="P:cephalic furrow formation"/>
    <property type="evidence" value="ECO:0000315"/>
    <property type="project" value="FlyBase"/>
</dbReference>
<dbReference type="GO" id="GO:0007480">
    <property type="term" value="P:imaginal disc-derived leg morphogenesis"/>
    <property type="evidence" value="ECO:0000315"/>
    <property type="project" value="FlyBase"/>
</dbReference>
<dbReference type="GO" id="GO:0000122">
    <property type="term" value="P:negative regulation of transcription by RNA polymerase II"/>
    <property type="evidence" value="ECO:0000315"/>
    <property type="project" value="FlyBase"/>
</dbReference>
<dbReference type="GO" id="GO:0045944">
    <property type="term" value="P:positive regulation of transcription by RNA polymerase II"/>
    <property type="evidence" value="ECO:0000314"/>
    <property type="project" value="FlyBase"/>
</dbReference>
<dbReference type="GO" id="GO:0035289">
    <property type="term" value="P:posterior head segmentation"/>
    <property type="evidence" value="ECO:0000304"/>
    <property type="project" value="FlyBase"/>
</dbReference>
<dbReference type="GO" id="GO:1902692">
    <property type="term" value="P:regulation of neuroblast proliferation"/>
    <property type="evidence" value="ECO:0000316"/>
    <property type="project" value="UniProtKB"/>
</dbReference>
<dbReference type="GO" id="GO:0045664">
    <property type="term" value="P:regulation of neuron differentiation"/>
    <property type="evidence" value="ECO:0000316"/>
    <property type="project" value="UniProtKB"/>
</dbReference>
<dbReference type="GO" id="GO:0006357">
    <property type="term" value="P:regulation of transcription by RNA polymerase II"/>
    <property type="evidence" value="ECO:0000318"/>
    <property type="project" value="GO_Central"/>
</dbReference>
<dbReference type="FunFam" id="3.30.160.60:FF:000032">
    <property type="entry name" value="Krueppel-like factor 4"/>
    <property type="match status" value="1"/>
</dbReference>
<dbReference type="Gene3D" id="3.30.160.60">
    <property type="entry name" value="Classic Zinc Finger"/>
    <property type="match status" value="3"/>
</dbReference>
<dbReference type="InterPro" id="IPR036236">
    <property type="entry name" value="Znf_C2H2_sf"/>
</dbReference>
<dbReference type="InterPro" id="IPR013087">
    <property type="entry name" value="Znf_C2H2_type"/>
</dbReference>
<dbReference type="PANTHER" id="PTHR23235">
    <property type="entry name" value="KRUEPPEL-LIKE TRANSCRIPTION FACTOR"/>
    <property type="match status" value="1"/>
</dbReference>
<dbReference type="PANTHER" id="PTHR23235:SF165">
    <property type="entry name" value="TRANSCRIPTION FACTOR BTD"/>
    <property type="match status" value="1"/>
</dbReference>
<dbReference type="Pfam" id="PF00096">
    <property type="entry name" value="zf-C2H2"/>
    <property type="match status" value="2"/>
</dbReference>
<dbReference type="SMART" id="SM00355">
    <property type="entry name" value="ZnF_C2H2"/>
    <property type="match status" value="3"/>
</dbReference>
<dbReference type="SUPFAM" id="SSF57667">
    <property type="entry name" value="beta-beta-alpha zinc fingers"/>
    <property type="match status" value="2"/>
</dbReference>
<dbReference type="PROSITE" id="PS00028">
    <property type="entry name" value="ZINC_FINGER_C2H2_1"/>
    <property type="match status" value="3"/>
</dbReference>
<dbReference type="PROSITE" id="PS50157">
    <property type="entry name" value="ZINC_FINGER_C2H2_2"/>
    <property type="match status" value="3"/>
</dbReference>
<gene>
    <name type="primary">btd</name>
    <name type="ORF">CG12653</name>
</gene>
<keyword id="KW-0010">Activator</keyword>
<keyword id="KW-0238">DNA-binding</keyword>
<keyword id="KW-0479">Metal-binding</keyword>
<keyword id="KW-0539">Nucleus</keyword>
<keyword id="KW-1185">Reference proteome</keyword>
<keyword id="KW-0677">Repeat</keyword>
<keyword id="KW-0804">Transcription</keyword>
<keyword id="KW-0805">Transcription regulation</keyword>
<keyword id="KW-0862">Zinc</keyword>
<keyword id="KW-0863">Zinc-finger</keyword>
<proteinExistence type="evidence at transcript level"/>
<accession>Q24266</accession>
<accession>Q9W319</accession>
<organism>
    <name type="scientific">Drosophila melanogaster</name>
    <name type="common">Fruit fly</name>
    <dbReference type="NCBI Taxonomy" id="7227"/>
    <lineage>
        <taxon>Eukaryota</taxon>
        <taxon>Metazoa</taxon>
        <taxon>Ecdysozoa</taxon>
        <taxon>Arthropoda</taxon>
        <taxon>Hexapoda</taxon>
        <taxon>Insecta</taxon>
        <taxon>Pterygota</taxon>
        <taxon>Neoptera</taxon>
        <taxon>Endopterygota</taxon>
        <taxon>Diptera</taxon>
        <taxon>Brachycera</taxon>
        <taxon>Muscomorpha</taxon>
        <taxon>Ephydroidea</taxon>
        <taxon>Drosophilidae</taxon>
        <taxon>Drosophila</taxon>
        <taxon>Sophophora</taxon>
    </lineage>
</organism>
<evidence type="ECO:0000250" key="1"/>
<evidence type="ECO:0000255" key="2">
    <source>
        <dbReference type="PROSITE-ProRule" id="PRU00042"/>
    </source>
</evidence>
<evidence type="ECO:0000256" key="3">
    <source>
        <dbReference type="SAM" id="MobiDB-lite"/>
    </source>
</evidence>
<name>BTD_DROME</name>